<protein>
    <recommendedName>
        <fullName>Homeobox protein SIX3</fullName>
    </recommendedName>
    <alternativeName>
        <fullName>Sine oculis homeobox homolog 3</fullName>
    </alternativeName>
</protein>
<accession>Q62233</accession>
<accession>P70176</accession>
<accession>P70177</accession>
<accession>Q4QQQ3</accession>
<evidence type="ECO:0000250" key="1">
    <source>
        <dbReference type="UniProtKB" id="O95343"/>
    </source>
</evidence>
<evidence type="ECO:0000255" key="2">
    <source>
        <dbReference type="PROSITE-ProRule" id="PRU00108"/>
    </source>
</evidence>
<evidence type="ECO:0000256" key="3">
    <source>
        <dbReference type="SAM" id="MobiDB-lite"/>
    </source>
</evidence>
<evidence type="ECO:0000269" key="4">
    <source>
    </source>
</evidence>
<evidence type="ECO:0000269" key="5">
    <source>
    </source>
</evidence>
<evidence type="ECO:0000269" key="6">
    <source>
    </source>
</evidence>
<evidence type="ECO:0000269" key="7">
    <source>
    </source>
</evidence>
<evidence type="ECO:0000269" key="8">
    <source>
    </source>
</evidence>
<evidence type="ECO:0000269" key="9">
    <source>
    </source>
</evidence>
<evidence type="ECO:0000269" key="10">
    <source>
    </source>
</evidence>
<evidence type="ECO:0000269" key="11">
    <source>
    </source>
</evidence>
<evidence type="ECO:0000269" key="12">
    <source>
    </source>
</evidence>
<evidence type="ECO:0000269" key="13">
    <source>
    </source>
</evidence>
<evidence type="ECO:0000269" key="14">
    <source>
    </source>
</evidence>
<evidence type="ECO:0000269" key="15">
    <source>
    </source>
</evidence>
<evidence type="ECO:0000269" key="16">
    <source>
    </source>
</evidence>
<evidence type="ECO:0000269" key="17">
    <source>
    </source>
</evidence>
<evidence type="ECO:0000269" key="18">
    <source>
    </source>
</evidence>
<evidence type="ECO:0000269" key="19">
    <source>
    </source>
</evidence>
<evidence type="ECO:0000269" key="20">
    <source>
    </source>
</evidence>
<evidence type="ECO:0000269" key="21">
    <source>
    </source>
</evidence>
<evidence type="ECO:0000303" key="22">
    <source>
    </source>
</evidence>
<evidence type="ECO:0000305" key="23"/>
<gene>
    <name type="primary">Six3</name>
</gene>
<name>SIX3_MOUSE</name>
<reference key="1">
    <citation type="journal article" date="1995" name="Development">
        <title>Six3, a murine homologue of the sine oculis gene, demarcates the most anterior border of the developing neural plate and is expressed during eye development.</title>
        <authorList>
            <person name="Oliver G."/>
            <person name="Mailhos A."/>
            <person name="Wehr R."/>
            <person name="Copeland N.G."/>
            <person name="Jenkins N.A."/>
            <person name="Gruss P."/>
        </authorList>
    </citation>
    <scope>NUCLEOTIDE SEQUENCE [MRNA] (ISOFORM SIX3B)</scope>
    <source>
        <strain>BALB/cJ</strain>
        <tissue>Embryonic brain</tissue>
    </source>
</reference>
<reference key="2">
    <citation type="journal article" date="1996" name="FEBS Lett.">
        <title>Identification and expression of Six family genes in mouse retina.</title>
        <authorList>
            <person name="Kawakami K."/>
            <person name="Ohto H."/>
            <person name="Takizawa T."/>
            <person name="Saito T."/>
        </authorList>
    </citation>
    <scope>NUCLEOTIDE SEQUENCE [MRNA] (ISOFORM SIX3A)</scope>
    <scope>NUCLEOTIDE SEQUENCE [MRNA] OF 4-333 (ISOFORM SIX3B)</scope>
    <source>
        <strain>BALB/cJ</strain>
    </source>
</reference>
<reference key="3">
    <citation type="journal article" date="2004" name="Genome Res.">
        <title>The status, quality, and expansion of the NIH full-length cDNA project: the Mammalian Gene Collection (MGC).</title>
        <authorList>
            <consortium name="The MGC Project Team"/>
        </authorList>
    </citation>
    <scope>NUCLEOTIDE SEQUENCE [LARGE SCALE MRNA] (ISOFORM SIX3B)</scope>
    <source>
        <strain>C57BL/6J</strain>
        <tissue>Brain</tissue>
    </source>
</reference>
<reference key="4">
    <citation type="journal article" date="2001" name="Dev. Dyn.">
        <title>Six3 promotes the formation of ectopic optic vesicle-like structures in mouse embryos.</title>
        <authorList>
            <person name="Lagutin O."/>
            <person name="Zhu C.C."/>
            <person name="Furuta Y."/>
            <person name="Rowitch D.H."/>
            <person name="McMahon A.P."/>
            <person name="Oliver G."/>
        </authorList>
    </citation>
    <scope>FUNCTION IN OPTIC VESICLE MORPHOGENESIS</scope>
    <scope>DEVELOPMENTAL STAGE</scope>
</reference>
<reference key="5">
    <citation type="journal article" date="2001" name="Nucleic Acids Res.">
        <title>Antagonistic action of Six3 and Prox1 at the gamma-crystallin promoter.</title>
        <authorList>
            <person name="Lengler J."/>
            <person name="Krausz E."/>
            <person name="Tomarev S."/>
            <person name="Prescott A."/>
            <person name="Quinlan R.A."/>
            <person name="Graw J."/>
        </authorList>
    </citation>
    <scope>FUNCTION IN LENS DEVELOPMENT</scope>
</reference>
<reference key="6">
    <citation type="journal article" date="2002" name="Development">
        <title>Six3-mediated auto repression and eye development requires its interaction with members of the Groucho-related family of co-repressors.</title>
        <authorList>
            <person name="Zhu C.C."/>
            <person name="Dyer M.A."/>
            <person name="Uchikawa M."/>
            <person name="Kondoh H."/>
            <person name="Lagutin O.V."/>
            <person name="Oliver G."/>
        </authorList>
    </citation>
    <scope>FUNCTION</scope>
    <scope>SUBCELLULAR LOCATION</scope>
    <scope>INDUCTION</scope>
    <scope>INTERACTION WITH TLE5 AND TLE4</scope>
    <scope>MUTAGENESIS OF PHE-88</scope>
</reference>
<reference key="7">
    <citation type="journal article" date="2002" name="Development">
        <title>Six3 inactivation reveals its essential role for the formation and patterning of the vertebrate eye.</title>
        <authorList>
            <person name="Carl M."/>
            <person name="Loosli F."/>
            <person name="Wittbrodt J."/>
        </authorList>
    </citation>
    <scope>FUNCTION IN PROXIMAL/DISTAL AXIS SPECIFICATION</scope>
</reference>
<reference key="8">
    <citation type="journal article" date="2002" name="Proc. Natl. Acad. Sci. U.S.A.">
        <title>Mutually regulated expression of Pax6 and Six3 and its implications for the Pax6 haploinsufficient lens phenotype.</title>
        <authorList>
            <person name="Goudreau G."/>
            <person name="Petrou P."/>
            <person name="Reneker L.W."/>
            <person name="Graw J."/>
            <person name="Loster J."/>
            <person name="Gruss P."/>
        </authorList>
    </citation>
    <scope>FUNCTION IN LENS DEVELOPMENT</scope>
    <scope>INDUCTION</scope>
</reference>
<reference key="9">
    <citation type="journal article" date="2003" name="Genes Dev.">
        <title>Six3 repression of Wnt signaling in the anterior neuroectoderm is essential for vertebrate forebrain development.</title>
        <authorList>
            <person name="Lagutin O.V."/>
            <person name="Zhu C.C."/>
            <person name="Kobayashi D."/>
            <person name="Topczewski J."/>
            <person name="Shimamura K."/>
            <person name="Puelles L."/>
            <person name="Russell H.R."/>
            <person name="McKinnon P.J."/>
            <person name="Solnica-Krezel L."/>
            <person name="Oliver G."/>
        </authorList>
    </citation>
    <scope>FUNCTION IN FOREBRAIN DEVELOPMENT</scope>
    <scope>DISRUPTION PHENOTYPE</scope>
</reference>
<reference key="10">
    <citation type="journal article" date="2005" name="Gene Expr. Patterns">
        <title>Pax6-dependence of Six3, Eya1 and Dach1 expression during lens and nasal placode induction.</title>
        <authorList>
            <person name="Purcell P."/>
            <person name="Oliver G."/>
            <person name="Mardon G."/>
            <person name="Donner A.L."/>
            <person name="Maas R.L."/>
        </authorList>
    </citation>
    <scope>INTERACTION WITH EYA1</scope>
    <scope>DEVELOPMENTAL STAGE</scope>
</reference>
<reference key="11">
    <citation type="journal article" date="2006" name="EMBO J.">
        <title>Six3 activation of Pax6 expression is essential for mammalian lens induction and specification.</title>
        <authorList>
            <person name="Liu W."/>
            <person name="Lagutin O.V."/>
            <person name="Mende M."/>
            <person name="Streit A."/>
            <person name="Oliver G."/>
        </authorList>
    </citation>
    <scope>FUNCTION IN LENS INDUCTION</scope>
    <scope>DISRUPTION PHENOTYPE</scope>
</reference>
<reference key="12">
    <citation type="journal article" date="2007" name="Proc. Natl. Acad. Sci. U.S.A.">
        <title>Repression of Six3 by a corepressor regulates rhodopsin expression.</title>
        <authorList>
            <person name="Manavathi B."/>
            <person name="Peng S."/>
            <person name="Rayala S.K."/>
            <person name="Talukder A.H."/>
            <person name="Wang M.H."/>
            <person name="Wang R.A."/>
            <person name="Balasenthil S."/>
            <person name="Agarwal N."/>
            <person name="Frishman L.J."/>
            <person name="Kumar R."/>
        </authorList>
    </citation>
    <scope>FUNCTION</scope>
    <scope>INTERACTION WITH HDAC2 AND MTA1</scope>
    <scope>MUTAGENESIS OF 233-ASN--SER-235</scope>
</reference>
<reference key="13">
    <citation type="journal article" date="2008" name="Cereb. Cortex">
        <title>Six3 controls the neural progenitor status in the murine CNS.</title>
        <authorList>
            <person name="Appolloni I."/>
            <person name="Calzolari F."/>
            <person name="Corte G."/>
            <person name="Perris R."/>
            <person name="Malatesta P."/>
        </authorList>
    </citation>
    <scope>FUNCTION IN PROLIFERATION OF NEURAL PROGENITOR CELLS</scope>
</reference>
<reference key="14">
    <citation type="journal article" date="2008" name="Development">
        <title>Six3 inactivation causes progressive caudalization and aberrant patterning of the mammalian diencephalon.</title>
        <authorList>
            <person name="Lavado A."/>
            <person name="Lagutin O.V."/>
            <person name="Oliver G."/>
        </authorList>
    </citation>
    <scope>FUNCTION IN FOREBRAIN DEVELOPMENT</scope>
    <scope>DISRUPTION PHENOTYPE</scope>
</reference>
<reference key="15">
    <citation type="journal article" date="2008" name="Dev. Biol.">
        <title>Genetic interaction between the homeobox transcription factors HESX1 and SIX3 is required for normal pituitary development.</title>
        <authorList>
            <person name="Gaston-Massuet C."/>
            <person name="Andoniadou C.L."/>
            <person name="Signore M."/>
            <person name="Sajedi E."/>
            <person name="Bird S."/>
            <person name="Turner J.M."/>
            <person name="Martinez-Barbera J.P."/>
        </authorList>
    </citation>
    <scope>FUNCTION IN PITUITARY DEVELOPMENT</scope>
    <scope>DISRUPTION PHENOTYPE</scope>
</reference>
<reference key="16">
    <citation type="journal article" date="2008" name="Dev. Cell">
        <title>Haploinsufficiency of Six3 fails to activate Sonic hedgehog expression in the ventral forebrain and causes holoprosencephaly.</title>
        <authorList>
            <person name="Geng X."/>
            <person name="Speirs C."/>
            <person name="Lagutin O."/>
            <person name="Inbal A."/>
            <person name="Liu W."/>
            <person name="Solnica-Krezel L."/>
            <person name="Jeong Y."/>
            <person name="Epstein D.J."/>
            <person name="Oliver G."/>
        </authorList>
    </citation>
    <scope>FUNCTION IN FOREBRAIN DEVELOPMENT</scope>
    <scope>DISRUPTION PHENOTYPE</scope>
    <scope>DEVELOPMENTAL STAGE</scope>
</reference>
<reference key="17">
    <citation type="journal article" date="2009" name="Hum. Mutat.">
        <title>EYA4, deleted in a case with middle interhemispheric variant of holoprosencephaly, interacts with SIX3 both physically and functionally.</title>
        <authorList>
            <person name="Abe Y."/>
            <person name="Oka A."/>
            <person name="Mizuguchi M."/>
            <person name="Igarashi T."/>
            <person name="Ishikawa S."/>
            <person name="Aburatani H."/>
            <person name="Yokoyama S."/>
            <person name="Asahara H."/>
            <person name="Nagao K."/>
            <person name="Yamada M."/>
            <person name="Miyashita T."/>
        </authorList>
    </citation>
    <scope>INTERACTION WITH EYA4</scope>
</reference>
<reference key="18">
    <citation type="journal article" date="2010" name="Cancer Res.">
        <title>Metastasis-associated protein 1 and its short form variant stimulates Wnt1 transcription through promoting its derepression from Six3 corepressor.</title>
        <authorList>
            <person name="Kumar R."/>
            <person name="Balasenthil S."/>
            <person name="Manavathi B."/>
            <person name="Rayala S.K."/>
            <person name="Pakala S.B."/>
        </authorList>
    </citation>
    <scope>FUNCTION</scope>
</reference>
<reference key="19">
    <citation type="journal article" date="2010" name="J. Clin. Invest.">
        <title>Neuroretina specification in mouse embryos requires Six3-mediated suppression of Wnt8b in the anterior neural plate.</title>
        <authorList>
            <person name="Liu W."/>
            <person name="Lagutin O."/>
            <person name="Swindell E."/>
            <person name="Jamrich M."/>
            <person name="Oliver G."/>
        </authorList>
    </citation>
    <scope>FUNCTION IN NEURAL RETINA DEVELOPMENT</scope>
</reference>
<reference key="20">
    <citation type="journal article" date="2011" name="Development">
        <title>Six3 is required for ependymal cell maturation.</title>
        <authorList>
            <person name="Lavado A."/>
            <person name="Oliver G."/>
        </authorList>
    </citation>
    <scope>FUNCTION IN CELL MATURATION</scope>
    <scope>TISSUE SPECIFICITY</scope>
</reference>
<reference key="21">
    <citation type="journal article" date="2013" name="Dev. Biol.">
        <title>Genomic code for Sox2 binding uncovers its regulatory role in Six3 activation in the forebrain.</title>
        <authorList>
            <person name="Lee B."/>
            <person name="Song H."/>
            <person name="Rizzoti K."/>
            <person name="Son Y."/>
            <person name="Yoon J."/>
            <person name="Baek K."/>
            <person name="Jeong Y."/>
        </authorList>
    </citation>
    <scope>INDUCTION</scope>
</reference>
<keyword id="KW-0025">Alternative splicing</keyword>
<keyword id="KW-0217">Developmental protein</keyword>
<keyword id="KW-0238">DNA-binding</keyword>
<keyword id="KW-0371">Homeobox</keyword>
<keyword id="KW-0539">Nucleus</keyword>
<keyword id="KW-1185">Reference proteome</keyword>
<keyword id="KW-0678">Repressor</keyword>
<keyword id="KW-0804">Transcription</keyword>
<keyword id="KW-0805">Transcription regulation</keyword>
<feature type="chain" id="PRO_0000049300" description="Homeobox protein SIX3">
    <location>
        <begin position="1"/>
        <end position="333"/>
    </location>
</feature>
<feature type="DNA-binding region" description="Homeobox" evidence="2">
    <location>
        <begin position="207"/>
        <end position="266"/>
    </location>
</feature>
<feature type="region of interest" description="Disordered" evidence="3">
    <location>
        <begin position="57"/>
        <end position="76"/>
    </location>
</feature>
<feature type="region of interest" description="Interaction with TLE5" evidence="6">
    <location>
        <begin position="73"/>
        <end position="120"/>
    </location>
</feature>
<feature type="region of interest" description="Disordered" evidence="3">
    <location>
        <begin position="233"/>
        <end position="252"/>
    </location>
</feature>
<feature type="region of interest" description="Bind to RHO promoter" evidence="13">
    <location>
        <begin position="233"/>
        <end position="235"/>
    </location>
</feature>
<feature type="region of interest" description="Disordered" evidence="3">
    <location>
        <begin position="259"/>
        <end position="333"/>
    </location>
</feature>
<feature type="compositionally biased region" description="Gly residues" evidence="3">
    <location>
        <begin position="57"/>
        <end position="71"/>
    </location>
</feature>
<feature type="compositionally biased region" description="Low complexity" evidence="3">
    <location>
        <begin position="294"/>
        <end position="310"/>
    </location>
</feature>
<feature type="compositionally biased region" description="Polar residues" evidence="3">
    <location>
        <begin position="317"/>
        <end position="333"/>
    </location>
</feature>
<feature type="splice variant" id="VSP_002291" description="In isoform SIX3A." evidence="23">
    <original>LQHQAIGPSGMRSL</original>
    <variation>SVAGTAARPPQAPG</variation>
    <location>
        <begin position="271"/>
        <end position="284"/>
    </location>
</feature>
<feature type="splice variant" id="VSP_002292" description="In isoform SIX3A." evidence="23">
    <location>
        <begin position="285"/>
        <end position="333"/>
    </location>
</feature>
<feature type="mutagenesis site" description="Loss of interaction with TLE5 and TLE4." evidence="6">
    <original>F</original>
    <variation>E</variation>
    <location>
        <position position="88"/>
    </location>
</feature>
<feature type="mutagenesis site" description="Suppression of SIX3-binding to rhodopsin promoter. Impairs the ability of Six3 to stimulate RHO transcription." evidence="13">
    <location>
        <begin position="233"/>
        <end position="235"/>
    </location>
</feature>
<feature type="sequence conflict" description="In Ref. 1; CAA62379." evidence="23" ref="1">
    <original>G</original>
    <variation>GG</variation>
    <location>
        <position position="44"/>
    </location>
</feature>
<feature type="sequence conflict" description="In Ref. 1; CAA62379." evidence="23" ref="1">
    <original>S</original>
    <variation>C</variation>
    <location>
        <position position="283"/>
    </location>
</feature>
<dbReference type="EMBL" id="X90871">
    <property type="protein sequence ID" value="CAA62379.1"/>
    <property type="status" value="ALT_SEQ"/>
    <property type="molecule type" value="mRNA"/>
</dbReference>
<dbReference type="EMBL" id="D83144">
    <property type="protein sequence ID" value="BAA11822.1"/>
    <property type="molecule type" value="mRNA"/>
</dbReference>
<dbReference type="EMBL" id="D83145">
    <property type="protein sequence ID" value="BAA11823.1"/>
    <property type="molecule type" value="mRNA"/>
</dbReference>
<dbReference type="EMBL" id="BC098096">
    <property type="protein sequence ID" value="AAH98096.1"/>
    <property type="molecule type" value="mRNA"/>
</dbReference>
<dbReference type="CCDS" id="CCDS50203.1">
    <molecule id="Q62233-1"/>
</dbReference>
<dbReference type="PIR" id="S74255">
    <property type="entry name" value="S74255"/>
</dbReference>
<dbReference type="RefSeq" id="NP_035511.2">
    <molecule id="Q62233-1"/>
    <property type="nucleotide sequence ID" value="NM_011381.4"/>
</dbReference>
<dbReference type="BMRB" id="Q62233"/>
<dbReference type="SMR" id="Q62233"/>
<dbReference type="BioGRID" id="203261">
    <property type="interactions" value="4"/>
</dbReference>
<dbReference type="DIP" id="DIP-46499N"/>
<dbReference type="FunCoup" id="Q62233">
    <property type="interactions" value="286"/>
</dbReference>
<dbReference type="IntAct" id="Q62233">
    <property type="interactions" value="5"/>
</dbReference>
<dbReference type="STRING" id="10090.ENSMUSP00000135312"/>
<dbReference type="iPTMnet" id="Q62233"/>
<dbReference type="PhosphoSitePlus" id="Q62233"/>
<dbReference type="PaxDb" id="10090-ENSMUSP00000135312"/>
<dbReference type="ProteomicsDB" id="261243">
    <molecule id="Q62233-1"/>
</dbReference>
<dbReference type="ProteomicsDB" id="261244">
    <molecule id="Q62233-2"/>
</dbReference>
<dbReference type="Antibodypedia" id="29931">
    <property type="antibodies" value="273 antibodies from 29 providers"/>
</dbReference>
<dbReference type="DNASU" id="20473"/>
<dbReference type="Ensembl" id="ENSMUST00000175898.4">
    <molecule id="Q62233-1"/>
    <property type="protein sequence ID" value="ENSMUSP00000135677.2"/>
    <property type="gene ID" value="ENSMUSG00000038805.11"/>
</dbReference>
<dbReference type="Ensembl" id="ENSMUST00000176081.3">
    <molecule id="Q62233-1"/>
    <property type="protein sequence ID" value="ENSMUSP00000135312.3"/>
    <property type="gene ID" value="ENSMUSG00000038805.11"/>
</dbReference>
<dbReference type="GeneID" id="20473"/>
<dbReference type="KEGG" id="mmu:20473"/>
<dbReference type="UCSC" id="uc008dub.2">
    <molecule id="Q62233-1"/>
    <property type="organism name" value="mouse"/>
</dbReference>
<dbReference type="AGR" id="MGI:102764"/>
<dbReference type="CTD" id="6496"/>
<dbReference type="MGI" id="MGI:102764">
    <property type="gene designation" value="Six3"/>
</dbReference>
<dbReference type="VEuPathDB" id="HostDB:ENSMUSG00000038805"/>
<dbReference type="eggNOG" id="KOG0775">
    <property type="taxonomic scope" value="Eukaryota"/>
</dbReference>
<dbReference type="GeneTree" id="ENSGT00940000160346"/>
<dbReference type="HOGENOM" id="CLU_046914_0_0_1"/>
<dbReference type="InParanoid" id="Q62233"/>
<dbReference type="OMA" id="PGCPTHN"/>
<dbReference type="TreeFam" id="TF315545"/>
<dbReference type="BioGRID-ORCS" id="20473">
    <property type="hits" value="1 hit in 79 CRISPR screens"/>
</dbReference>
<dbReference type="ChiTaRS" id="Six3">
    <property type="organism name" value="mouse"/>
</dbReference>
<dbReference type="PRO" id="PR:Q62233"/>
<dbReference type="Proteomes" id="UP000000589">
    <property type="component" value="Chromosome 17"/>
</dbReference>
<dbReference type="RNAct" id="Q62233">
    <property type="molecule type" value="protein"/>
</dbReference>
<dbReference type="Bgee" id="ENSMUSG00000038805">
    <property type="expression patterns" value="Expressed in optic fissure and 118 other cell types or tissues"/>
</dbReference>
<dbReference type="ExpressionAtlas" id="Q62233">
    <property type="expression patterns" value="baseline and differential"/>
</dbReference>
<dbReference type="GO" id="GO:0005634">
    <property type="term" value="C:nucleus"/>
    <property type="evidence" value="ECO:0000314"/>
    <property type="project" value="MGI"/>
</dbReference>
<dbReference type="GO" id="GO:0003677">
    <property type="term" value="F:DNA binding"/>
    <property type="evidence" value="ECO:0000314"/>
    <property type="project" value="MGI"/>
</dbReference>
<dbReference type="GO" id="GO:0001228">
    <property type="term" value="F:DNA-binding transcription activator activity, RNA polymerase II-specific"/>
    <property type="evidence" value="ECO:0000314"/>
    <property type="project" value="NTNU_SB"/>
</dbReference>
<dbReference type="GO" id="GO:0000981">
    <property type="term" value="F:DNA-binding transcription factor activity, RNA polymerase II-specific"/>
    <property type="evidence" value="ECO:0000314"/>
    <property type="project" value="MGI"/>
</dbReference>
<dbReference type="GO" id="GO:0042826">
    <property type="term" value="F:histone deacetylase binding"/>
    <property type="evidence" value="ECO:0000353"/>
    <property type="project" value="UniProtKB"/>
</dbReference>
<dbReference type="GO" id="GO:0000978">
    <property type="term" value="F:RNA polymerase II cis-regulatory region sequence-specific DNA binding"/>
    <property type="evidence" value="ECO:0000314"/>
    <property type="project" value="NTNU_SB"/>
</dbReference>
<dbReference type="GO" id="GO:0043565">
    <property type="term" value="F:sequence-specific DNA binding"/>
    <property type="evidence" value="ECO:0000314"/>
    <property type="project" value="MGI"/>
</dbReference>
<dbReference type="GO" id="GO:0001222">
    <property type="term" value="F:transcription corepressor binding"/>
    <property type="evidence" value="ECO:0000353"/>
    <property type="project" value="UniProtKB"/>
</dbReference>
<dbReference type="GO" id="GO:1902742">
    <property type="term" value="P:apoptotic process involved in development"/>
    <property type="evidence" value="ECO:0000315"/>
    <property type="project" value="UniProtKB"/>
</dbReference>
<dbReference type="GO" id="GO:0007420">
    <property type="term" value="P:brain development"/>
    <property type="evidence" value="ECO:0000315"/>
    <property type="project" value="MGI"/>
</dbReference>
<dbReference type="GO" id="GO:0043010">
    <property type="term" value="P:camera-type eye development"/>
    <property type="evidence" value="ECO:0000316"/>
    <property type="project" value="MGI"/>
</dbReference>
<dbReference type="GO" id="GO:0021846">
    <property type="term" value="P:cell proliferation in forebrain"/>
    <property type="evidence" value="ECO:0000315"/>
    <property type="project" value="UniProtKB"/>
</dbReference>
<dbReference type="GO" id="GO:0048512">
    <property type="term" value="P:circadian behavior"/>
    <property type="evidence" value="ECO:0000315"/>
    <property type="project" value="MGI"/>
</dbReference>
<dbReference type="GO" id="GO:0021536">
    <property type="term" value="P:diencephalon development"/>
    <property type="evidence" value="ECO:0000316"/>
    <property type="project" value="MGI"/>
</dbReference>
<dbReference type="GO" id="GO:0002070">
    <property type="term" value="P:epithelial cell maturation"/>
    <property type="evidence" value="ECO:0000315"/>
    <property type="project" value="UniProtKB"/>
</dbReference>
<dbReference type="GO" id="GO:0001654">
    <property type="term" value="P:eye development"/>
    <property type="evidence" value="ECO:0000314"/>
    <property type="project" value="MGI"/>
</dbReference>
<dbReference type="GO" id="GO:0021797">
    <property type="term" value="P:forebrain anterior/posterior pattern specification"/>
    <property type="evidence" value="ECO:0000315"/>
    <property type="project" value="MGI"/>
</dbReference>
<dbReference type="GO" id="GO:0021798">
    <property type="term" value="P:forebrain dorsal/ventral pattern formation"/>
    <property type="evidence" value="ECO:0000250"/>
    <property type="project" value="UniProtKB"/>
</dbReference>
<dbReference type="GO" id="GO:0008406">
    <property type="term" value="P:gonad development"/>
    <property type="evidence" value="ECO:0000316"/>
    <property type="project" value="MGI"/>
</dbReference>
<dbReference type="GO" id="GO:0002088">
    <property type="term" value="P:lens development in camera-type eye"/>
    <property type="evidence" value="ECO:0000314"/>
    <property type="project" value="UniProtKB"/>
</dbReference>
<dbReference type="GO" id="GO:1990086">
    <property type="term" value="P:lens fiber cell apoptotic process"/>
    <property type="evidence" value="ECO:0000314"/>
    <property type="project" value="UniProtKB"/>
</dbReference>
<dbReference type="GO" id="GO:0070306">
    <property type="term" value="P:lens fiber cell differentiation"/>
    <property type="evidence" value="ECO:0000314"/>
    <property type="project" value="UniProtKB"/>
</dbReference>
<dbReference type="GO" id="GO:0060235">
    <property type="term" value="P:lens induction in camera-type eye"/>
    <property type="evidence" value="ECO:0000315"/>
    <property type="project" value="MGI"/>
</dbReference>
<dbReference type="GO" id="GO:0035264">
    <property type="term" value="P:multicellular organism growth"/>
    <property type="evidence" value="ECO:0000316"/>
    <property type="project" value="MGI"/>
</dbReference>
<dbReference type="GO" id="GO:0045892">
    <property type="term" value="P:negative regulation of DNA-templated transcription"/>
    <property type="evidence" value="ECO:0000314"/>
    <property type="project" value="UniProtKB"/>
</dbReference>
<dbReference type="GO" id="GO:0045665">
    <property type="term" value="P:negative regulation of neuron differentiation"/>
    <property type="evidence" value="ECO:0000314"/>
    <property type="project" value="UniProtKB"/>
</dbReference>
<dbReference type="GO" id="GO:0030178">
    <property type="term" value="P:negative regulation of Wnt signaling pathway"/>
    <property type="evidence" value="ECO:0000315"/>
    <property type="project" value="MGI"/>
</dbReference>
<dbReference type="GO" id="GO:0014016">
    <property type="term" value="P:neuroblast differentiation"/>
    <property type="evidence" value="ECO:0000315"/>
    <property type="project" value="UniProtKB"/>
</dbReference>
<dbReference type="GO" id="GO:0097402">
    <property type="term" value="P:neuroblast migration"/>
    <property type="evidence" value="ECO:0000315"/>
    <property type="project" value="UniProtKB"/>
</dbReference>
<dbReference type="GO" id="GO:0003404">
    <property type="term" value="P:optic vesicle morphogenesis"/>
    <property type="evidence" value="ECO:0000314"/>
    <property type="project" value="UniProtKB"/>
</dbReference>
<dbReference type="GO" id="GO:0021983">
    <property type="term" value="P:pituitary gland development"/>
    <property type="evidence" value="ECO:0000315"/>
    <property type="project" value="UniProtKB"/>
</dbReference>
<dbReference type="GO" id="GO:0045944">
    <property type="term" value="P:positive regulation of transcription by RNA polymerase II"/>
    <property type="evidence" value="ECO:0000314"/>
    <property type="project" value="NTNU_SB"/>
</dbReference>
<dbReference type="GO" id="GO:0006606">
    <property type="term" value="P:protein import into nucleus"/>
    <property type="evidence" value="ECO:0000314"/>
    <property type="project" value="MGI"/>
</dbReference>
<dbReference type="GO" id="GO:0009946">
    <property type="term" value="P:proximal/distal axis specification"/>
    <property type="evidence" value="ECO:0000314"/>
    <property type="project" value="UniProtKB"/>
</dbReference>
<dbReference type="GO" id="GO:1901987">
    <property type="term" value="P:regulation of cell cycle phase transition"/>
    <property type="evidence" value="ECO:0000314"/>
    <property type="project" value="UniProtKB"/>
</dbReference>
<dbReference type="GO" id="GO:0042127">
    <property type="term" value="P:regulation of cell population proliferation"/>
    <property type="evidence" value="ECO:0000315"/>
    <property type="project" value="UniProtKB"/>
</dbReference>
<dbReference type="GO" id="GO:2000177">
    <property type="term" value="P:regulation of neural precursor cell proliferation"/>
    <property type="evidence" value="ECO:0000314"/>
    <property type="project" value="UniProtKB"/>
</dbReference>
<dbReference type="GO" id="GO:0061074">
    <property type="term" value="P:regulation of neural retina development"/>
    <property type="evidence" value="ECO:0000315"/>
    <property type="project" value="UniProtKB"/>
</dbReference>
<dbReference type="GO" id="GO:1902692">
    <property type="term" value="P:regulation of neuroblast proliferation"/>
    <property type="evidence" value="ECO:0000315"/>
    <property type="project" value="UniProtKB"/>
</dbReference>
<dbReference type="GO" id="GO:0021537">
    <property type="term" value="P:telencephalon development"/>
    <property type="evidence" value="ECO:0000315"/>
    <property type="project" value="UniProtKB"/>
</dbReference>
<dbReference type="GO" id="GO:0021978">
    <property type="term" value="P:telencephalon regionalization"/>
    <property type="evidence" value="ECO:0000315"/>
    <property type="project" value="UniProtKB"/>
</dbReference>
<dbReference type="GO" id="GO:0030878">
    <property type="term" value="P:thyroid gland development"/>
    <property type="evidence" value="ECO:0000316"/>
    <property type="project" value="MGI"/>
</dbReference>
<dbReference type="CDD" id="cd00086">
    <property type="entry name" value="homeodomain"/>
    <property type="match status" value="1"/>
</dbReference>
<dbReference type="FunFam" id="1.10.10.60:FF:000046">
    <property type="entry name" value="SIX homeobox 3"/>
    <property type="match status" value="1"/>
</dbReference>
<dbReference type="Gene3D" id="1.10.10.60">
    <property type="entry name" value="Homeodomain-like"/>
    <property type="match status" value="1"/>
</dbReference>
<dbReference type="InterPro" id="IPR001356">
    <property type="entry name" value="HD"/>
</dbReference>
<dbReference type="InterPro" id="IPR009057">
    <property type="entry name" value="Homeodomain-like_sf"/>
</dbReference>
<dbReference type="InterPro" id="IPR031701">
    <property type="entry name" value="SIX1_SD"/>
</dbReference>
<dbReference type="PANTHER" id="PTHR10390">
    <property type="entry name" value="HOMEOBOX PROTEIN SIX"/>
    <property type="match status" value="1"/>
</dbReference>
<dbReference type="PANTHER" id="PTHR10390:SF31">
    <property type="entry name" value="HOMEOBOX PROTEIN SIX3"/>
    <property type="match status" value="1"/>
</dbReference>
<dbReference type="Pfam" id="PF00046">
    <property type="entry name" value="Homeodomain"/>
    <property type="match status" value="1"/>
</dbReference>
<dbReference type="Pfam" id="PF16878">
    <property type="entry name" value="SIX1_SD"/>
    <property type="match status" value="1"/>
</dbReference>
<dbReference type="SMART" id="SM00389">
    <property type="entry name" value="HOX"/>
    <property type="match status" value="1"/>
</dbReference>
<dbReference type="SUPFAM" id="SSF46689">
    <property type="entry name" value="Homeodomain-like"/>
    <property type="match status" value="1"/>
</dbReference>
<dbReference type="PROSITE" id="PS50071">
    <property type="entry name" value="HOMEOBOX_2"/>
    <property type="match status" value="1"/>
</dbReference>
<organism>
    <name type="scientific">Mus musculus</name>
    <name type="common">Mouse</name>
    <dbReference type="NCBI Taxonomy" id="10090"/>
    <lineage>
        <taxon>Eukaryota</taxon>
        <taxon>Metazoa</taxon>
        <taxon>Chordata</taxon>
        <taxon>Craniata</taxon>
        <taxon>Vertebrata</taxon>
        <taxon>Euteleostomi</taxon>
        <taxon>Mammalia</taxon>
        <taxon>Eutheria</taxon>
        <taxon>Euarchontoglires</taxon>
        <taxon>Glires</taxon>
        <taxon>Rodentia</taxon>
        <taxon>Myomorpha</taxon>
        <taxon>Muroidea</taxon>
        <taxon>Muridae</taxon>
        <taxon>Murinae</taxon>
        <taxon>Mus</taxon>
        <taxon>Mus</taxon>
    </lineage>
</organism>
<proteinExistence type="evidence at protein level"/>
<sequence>MVFRSPLDLYSSHFLLPNFADSHHCSLLLASSGGGSGASGGGGGAGGGGGGNRAGGGGAGGAGGGSGGGGSRAPPEELSMFQLPTLNFSPEQVASVCETLEETGDIERLGRFLWSLPVAPGACEAINKHESILRARAVVAFHTGNFRDLYHILENHKFTKESHGKLQAMWLEAHYQEAEKLRGRPLGPVDKYRVRKKFPLPRTIWDGEQKTHCFKERTRSLLREWYLQDPYPNPSKKRELAQATGLTPTQVGNWFKNRRQRDRAAAAKNRLQHQAIGPSGMRSLAEPGCPTHGSAESPSTAASPTTSVSSLTERADTGTSILSVTSSDSECDV</sequence>
<comment type="function">
    <text evidence="1 4 5 6 7 8 9 11 12 13 14 15 16 18 19 20">Transcriptional regulator which can act as both a transcriptional repressor and activator by binding a ATTA homeodomain core recognition sequence on these target genes. During forebrain development represses WNT1 expression allowing zona limitans intrathalamica formation and thereby ensuring proper anterio-posterior patterning of the diencephalon and formation of the rostral diencephalon (PubMed:18094027). Acts as a direct upstream activator of SHH expression in the rostral diencephalon ventral midline and that in turn SHH maintains its expression (PubMed:18775421). In addition, Six3 activity is required for the formation of the telencephalon. During postnatal stages of brain development is necessary for ependymal cell maturation by promoting the maturation of radial glia into ependymal cells through regulation of neuroblast proliferation and migration (PubMed:22071110). Acts on the proliferation and differentiation of neural progenitor cells through activating transcription of CCND1 AND CCND2 (PubMed:17576749). During early lens formation plays a role in lens induction and specification by activating directly PAX6 in the presumptive lens ectoderm (PubMed:17066077). In turn PAX6 activates SIX3 resulting in activation of PDGFRA and CCND1 promoting cell proliferation (PubMed:12072567). Also is required for the neuroretina development by directly suppressing WNT8B expression in the anterior neural plate territory (PubMed:20890044). Its action during retina development and lens morphogenesis is TLE5 and TLE4-dependent manner. Furthermore, during eye development regulates several genes expression. Before and during early lens development represses the CRYGF promoter by binding a SIX repressor element (PubMed:11139622). Directly activates RHO transcription, or cooperates with CRX or NRL (PubMed:17666527). Six3 also functions in the formation of the proximodistal axis of the optic cup (PubMed:12163408), and promotes the formation of optic vesicles-like structures (PubMed:11458394). During pituitary development, acts in parallel or alternatively with HESX1 to control cell proliferation through Wnt/beta-catenin pathway (PubMed:18694563). Plays a role in eye development by suppressing WNT1 expression and in dorsal-ventral patterning by repressing BMP signaling pathway (By similarity).</text>
</comment>
<comment type="subunit">
    <text evidence="1 6 10 13 17">Interacts with EYA4; translocates EYA4 from the cytoplasm to the nucleus and promotes activation of their target genes. Interacts with MTA1 and HDAC2; represses its own transcription. Interacts with MTA1; facilitates the binding of SIX3 to the core DNA motif of SIX3 promoter. Interacts with EYA1; promotes EYA1 translocation to the nucleus. Interacts with TLE1 and TLE5 (via Q domain); can act in combination with either TLE1 and/or TLE5 leading to transcriptional repression or activation, respectively (By similarity). Interacts (via homeobox) with NR4A3; differentially regulates the transcriptional activities NR4A3 (By similarity). Interacts with GMNN (By similarity). Interacts with TLE4.</text>
</comment>
<comment type="interaction">
    <interactant intactId="EBI-2297327">
        <id>Q62233</id>
    </interactant>
    <interactant intactId="EBI-302251">
        <id>P70288</id>
        <label>Hdac2</label>
    </interactant>
    <organismsDiffer>false</organismsDiffer>
    <experiments>2</experiments>
</comment>
<comment type="interaction">
    <interactant intactId="EBI-2297327">
        <id>Q62233</id>
    </interactant>
    <interactant intactId="EBI-1216353">
        <id>Q8K4B0</id>
        <label>Mta1</label>
    </interactant>
    <organismsDiffer>false</organismsDiffer>
    <experiments>2</experiments>
</comment>
<comment type="interaction">
    <interactant intactId="EBI-2297327">
        <id>Q62233</id>
    </interactant>
    <interactant intactId="EBI-2297871">
        <id>Q62441</id>
        <label>Tle4</label>
    </interactant>
    <organismsDiffer>false</organismsDiffer>
    <experiments>2</experiments>
</comment>
<comment type="interaction">
    <interactant intactId="EBI-2297327">
        <id>Q62233</id>
    </interactant>
    <interactant intactId="EBI-646888">
        <id>P63002</id>
        <label>Tle5</label>
    </interactant>
    <organismsDiffer>false</organismsDiffer>
    <experiments>5</experiments>
</comment>
<comment type="interaction">
    <interactant intactId="EBI-2297327">
        <id>Q62233</id>
    </interactant>
    <interactant intactId="EBI-153866">
        <id>P16371</id>
        <label>gro</label>
    </interactant>
    <organismsDiffer>true</organismsDiffer>
    <experiments>2</experiments>
</comment>
<comment type="subcellular location">
    <subcellularLocation>
        <location evidence="2 6">Nucleus</location>
    </subcellularLocation>
</comment>
<comment type="alternative products">
    <event type="alternative splicing"/>
    <isoform>
        <id>Q62233-1</id>
        <name evidence="22">SIX3B</name>
        <sequence type="displayed"/>
    </isoform>
    <isoform>
        <id>Q62233-2</id>
        <name evidence="22">SIX3A</name>
        <sequence type="described" ref="VSP_002291 VSP_002292"/>
    </isoform>
</comment>
<comment type="tissue specificity">
    <text evidence="20">Expressed in ependymal cells during the formation of the lateral wall.</text>
</comment>
<comment type="developmental stage">
    <text evidence="5 10 15">Expressed in the developing retina (at protein level). First expressed at 6.5 dpc of embryo development around the anterior border. At 8.5 dpc, expression is found over the anterior neural plate. At 9.5 dpc, in the diencephalic part of the ventral forebrain, optic vesicles, olfactory placodes and Rathke pouch. In later stages, present in hypothalamus, eyes and pituitary. Expression at around 7.5 dpc to 8 dpc is high in the anterior neural ectoderm. Weaker expression is detected in the prechordal plate. At the 5 somite stage (8.0 dpc), expression is maintained in the anterior neural ectoderm. Around the 8 somite stage (8.0 dpc), expression is already restricted to the ventral forebrain and eye field. At the 12 somite stage (8.5 dpc), expression is maintained in the ventral forebrain (PubMed:18694563). At 9.5 dpc strongly expressed throughout the prospective nasal ectoderm. At 10.5 dpc remains expressed throughout the nasal ectoderm (PubMed:16024294). At 7.5 dpc expression is found in the developing anterior neuroectoderm. At 9.0 dpc expression is found in the region of the presumptive lens ectoderm and developing optic vesicle. At 9.5 dpc expression is found in the lens placode, optic vesicles, and ventral forebrain (PubMed:11458394).</text>
</comment>
<comment type="induction">
    <text evidence="6 7 21">Represses its own transcription in a TLE4-dependent manner. Induces in lens by PAX6 in a dosage-dependent manner. Activated by SOX2 during forebrain development. Inhibited by MTA1 in mammary glands.</text>
</comment>
<comment type="disruption phenotype">
    <text evidence="9 11 14 15 16">Embryos die at birth and lack most head structures anterior to the midbrain, including the eyes and nose (PubMed:12569128). Embryonic SHH and SIX3 double heterozygous mice exhibit a semilobar holoprosencephaly-like phenotype and a dorsoventral patterning defects in telencephalon (PubMed:18694563). Embryonic WNT1 and SIX3 double homozygous mice lack cerebellum and colliculus and have a severely reduced midbrain (PubMed:18094027). Conditional knockout in eye exhibit drastically reduced lens size, cataracts, or absence of the lens (PubMed:17066077). Embryo of SIX3 and HESX1 heterozygous mice exhibit severe growth retardation after weaning, with additional gonadal and thyroid gland defects, resulting in a lethal phenotype (PubMed:18775421).</text>
</comment>
<comment type="similarity">
    <text evidence="23">Belongs to the SIX/Sine oculis homeobox family.</text>
</comment>
<comment type="sequence caution" evidence="23">
    <conflict type="erroneous initiation">
        <sequence resource="EMBL-CDS" id="CAA62379"/>
    </conflict>
    <text>Extended N-terminus.</text>
</comment>
<comment type="sequence caution" evidence="23">
    <conflict type="frameshift">
        <sequence resource="EMBL-CDS" id="CAA62379"/>
    </conflict>
</comment>